<proteinExistence type="inferred from homology"/>
<reference key="1">
    <citation type="journal article" date="2012" name="BMC Microbiol.">
        <title>Genome sequence of Desulfitobacterium hafniense DCB-2, a Gram-positive anaerobe capable of dehalogenation and metal reduction.</title>
        <authorList>
            <person name="Kim S.H."/>
            <person name="Harzman C."/>
            <person name="Davis J.K."/>
            <person name="Hutcheson R."/>
            <person name="Broderick J.B."/>
            <person name="Marsh T.L."/>
            <person name="Tiedje J.M."/>
        </authorList>
    </citation>
    <scope>NUCLEOTIDE SEQUENCE [LARGE SCALE GENOMIC DNA]</scope>
    <source>
        <strain>DSM 10664 / DCB-2</strain>
    </source>
</reference>
<feature type="chain" id="PRO_1000166002" description="Large ribosomal subunit protein uL4">
    <location>
        <begin position="1"/>
        <end position="207"/>
    </location>
</feature>
<feature type="region of interest" description="Disordered" evidence="2">
    <location>
        <begin position="56"/>
        <end position="76"/>
    </location>
</feature>
<feature type="compositionally biased region" description="Basic residues" evidence="2">
    <location>
        <begin position="60"/>
        <end position="71"/>
    </location>
</feature>
<comment type="function">
    <text evidence="1">One of the primary rRNA binding proteins, this protein initially binds near the 5'-end of the 23S rRNA. It is important during the early stages of 50S assembly. It makes multiple contacts with different domains of the 23S rRNA in the assembled 50S subunit and ribosome.</text>
</comment>
<comment type="function">
    <text evidence="1">Forms part of the polypeptide exit tunnel.</text>
</comment>
<comment type="subunit">
    <text evidence="1">Part of the 50S ribosomal subunit.</text>
</comment>
<comment type="similarity">
    <text evidence="1">Belongs to the universal ribosomal protein uL4 family.</text>
</comment>
<name>RL4_DESHD</name>
<sequence length="207" mass="22773">MPKVQVVNMQGSPVGELELDEYVFGIEPNTHVMHQAVVGQLASQRRGTHSTLLRGEVRGGGRKPWRQKGTGRARAGSIRSPLWRGGAVLFGPKPRKYGFSLPKKVRRLALRSALSSKVNEQKLIVLEDLSLNEAKTREMVKVLQALNVGKKALIVTDEFMETIDRSARNIAGIKTTAVEGMNIYDLLNSDVIVMTKAAVTKTEEVLA</sequence>
<organism>
    <name type="scientific">Desulfitobacterium hafniense (strain DSM 10664 / DCB-2)</name>
    <dbReference type="NCBI Taxonomy" id="272564"/>
    <lineage>
        <taxon>Bacteria</taxon>
        <taxon>Bacillati</taxon>
        <taxon>Bacillota</taxon>
        <taxon>Clostridia</taxon>
        <taxon>Eubacteriales</taxon>
        <taxon>Desulfitobacteriaceae</taxon>
        <taxon>Desulfitobacterium</taxon>
    </lineage>
</organism>
<dbReference type="EMBL" id="CP001336">
    <property type="protein sequence ID" value="ACL18490.1"/>
    <property type="molecule type" value="Genomic_DNA"/>
</dbReference>
<dbReference type="RefSeq" id="WP_015942754.1">
    <property type="nucleotide sequence ID" value="NC_011830.1"/>
</dbReference>
<dbReference type="SMR" id="B8G1W7"/>
<dbReference type="KEGG" id="dhd:Dhaf_0423"/>
<dbReference type="HOGENOM" id="CLU_041575_5_2_9"/>
<dbReference type="Proteomes" id="UP000007726">
    <property type="component" value="Chromosome"/>
</dbReference>
<dbReference type="GO" id="GO:1990904">
    <property type="term" value="C:ribonucleoprotein complex"/>
    <property type="evidence" value="ECO:0007669"/>
    <property type="project" value="UniProtKB-KW"/>
</dbReference>
<dbReference type="GO" id="GO:0005840">
    <property type="term" value="C:ribosome"/>
    <property type="evidence" value="ECO:0007669"/>
    <property type="project" value="UniProtKB-KW"/>
</dbReference>
<dbReference type="GO" id="GO:0019843">
    <property type="term" value="F:rRNA binding"/>
    <property type="evidence" value="ECO:0007669"/>
    <property type="project" value="UniProtKB-UniRule"/>
</dbReference>
<dbReference type="GO" id="GO:0003735">
    <property type="term" value="F:structural constituent of ribosome"/>
    <property type="evidence" value="ECO:0007669"/>
    <property type="project" value="InterPro"/>
</dbReference>
<dbReference type="GO" id="GO:0006412">
    <property type="term" value="P:translation"/>
    <property type="evidence" value="ECO:0007669"/>
    <property type="project" value="UniProtKB-UniRule"/>
</dbReference>
<dbReference type="Gene3D" id="3.40.1370.10">
    <property type="match status" value="1"/>
</dbReference>
<dbReference type="HAMAP" id="MF_01328_B">
    <property type="entry name" value="Ribosomal_uL4_B"/>
    <property type="match status" value="1"/>
</dbReference>
<dbReference type="InterPro" id="IPR002136">
    <property type="entry name" value="Ribosomal_uL4"/>
</dbReference>
<dbReference type="InterPro" id="IPR013005">
    <property type="entry name" value="Ribosomal_uL4-like"/>
</dbReference>
<dbReference type="InterPro" id="IPR023574">
    <property type="entry name" value="Ribosomal_uL4_dom_sf"/>
</dbReference>
<dbReference type="NCBIfam" id="TIGR03953">
    <property type="entry name" value="rplD_bact"/>
    <property type="match status" value="1"/>
</dbReference>
<dbReference type="PANTHER" id="PTHR10746">
    <property type="entry name" value="50S RIBOSOMAL PROTEIN L4"/>
    <property type="match status" value="1"/>
</dbReference>
<dbReference type="PANTHER" id="PTHR10746:SF6">
    <property type="entry name" value="LARGE RIBOSOMAL SUBUNIT PROTEIN UL4M"/>
    <property type="match status" value="1"/>
</dbReference>
<dbReference type="Pfam" id="PF00573">
    <property type="entry name" value="Ribosomal_L4"/>
    <property type="match status" value="1"/>
</dbReference>
<dbReference type="SUPFAM" id="SSF52166">
    <property type="entry name" value="Ribosomal protein L4"/>
    <property type="match status" value="1"/>
</dbReference>
<keyword id="KW-0687">Ribonucleoprotein</keyword>
<keyword id="KW-0689">Ribosomal protein</keyword>
<keyword id="KW-0694">RNA-binding</keyword>
<keyword id="KW-0699">rRNA-binding</keyword>
<accession>B8G1W7</accession>
<gene>
    <name evidence="1" type="primary">rplD</name>
    <name type="ordered locus">Dhaf_0423</name>
</gene>
<evidence type="ECO:0000255" key="1">
    <source>
        <dbReference type="HAMAP-Rule" id="MF_01328"/>
    </source>
</evidence>
<evidence type="ECO:0000256" key="2">
    <source>
        <dbReference type="SAM" id="MobiDB-lite"/>
    </source>
</evidence>
<evidence type="ECO:0000305" key="3"/>
<protein>
    <recommendedName>
        <fullName evidence="1">Large ribosomal subunit protein uL4</fullName>
    </recommendedName>
    <alternativeName>
        <fullName evidence="3">50S ribosomal protein L4</fullName>
    </alternativeName>
</protein>